<comment type="function">
    <text evidence="1">Aspartyl-tRNA synthetase with relaxed tRNA specificity since it is able to aspartylate not only its cognate tRNA(Asp) but also tRNA(Asn). Reaction proceeds in two steps: L-aspartate is first activated by ATP to form Asp-AMP and then transferred to the acceptor end of tRNA(Asp/Asn).</text>
</comment>
<comment type="catalytic activity">
    <reaction evidence="1">
        <text>tRNA(Asx) + L-aspartate + ATP = L-aspartyl-tRNA(Asx) + AMP + diphosphate</text>
        <dbReference type="Rhea" id="RHEA:18349"/>
        <dbReference type="Rhea" id="RHEA-COMP:9710"/>
        <dbReference type="Rhea" id="RHEA-COMP:9711"/>
        <dbReference type="ChEBI" id="CHEBI:29991"/>
        <dbReference type="ChEBI" id="CHEBI:30616"/>
        <dbReference type="ChEBI" id="CHEBI:33019"/>
        <dbReference type="ChEBI" id="CHEBI:78442"/>
        <dbReference type="ChEBI" id="CHEBI:78516"/>
        <dbReference type="ChEBI" id="CHEBI:456215"/>
        <dbReference type="EC" id="6.1.1.23"/>
    </reaction>
</comment>
<comment type="subunit">
    <text evidence="1">Homodimer.</text>
</comment>
<comment type="subcellular location">
    <subcellularLocation>
        <location evidence="1">Cytoplasm</location>
    </subcellularLocation>
</comment>
<comment type="similarity">
    <text evidence="1">Belongs to the class-II aminoacyl-tRNA synthetase family. Type 1 subfamily.</text>
</comment>
<dbReference type="EC" id="6.1.1.23" evidence="1"/>
<dbReference type="EMBL" id="CP000386">
    <property type="protein sequence ID" value="ABG04314.1"/>
    <property type="molecule type" value="Genomic_DNA"/>
</dbReference>
<dbReference type="RefSeq" id="WP_011564331.1">
    <property type="nucleotide sequence ID" value="NC_008148.1"/>
</dbReference>
<dbReference type="SMR" id="Q1AWB4"/>
<dbReference type="STRING" id="266117.Rxyl_1351"/>
<dbReference type="KEGG" id="rxy:Rxyl_1351"/>
<dbReference type="eggNOG" id="COG0173">
    <property type="taxonomic scope" value="Bacteria"/>
</dbReference>
<dbReference type="HOGENOM" id="CLU_014330_3_2_11"/>
<dbReference type="OrthoDB" id="9802326at2"/>
<dbReference type="PhylomeDB" id="Q1AWB4"/>
<dbReference type="Proteomes" id="UP000006637">
    <property type="component" value="Chromosome"/>
</dbReference>
<dbReference type="GO" id="GO:0005737">
    <property type="term" value="C:cytoplasm"/>
    <property type="evidence" value="ECO:0007669"/>
    <property type="project" value="UniProtKB-SubCell"/>
</dbReference>
<dbReference type="GO" id="GO:0004815">
    <property type="term" value="F:aspartate-tRNA ligase activity"/>
    <property type="evidence" value="ECO:0007669"/>
    <property type="project" value="UniProtKB-UniRule"/>
</dbReference>
<dbReference type="GO" id="GO:0050560">
    <property type="term" value="F:aspartate-tRNA(Asn) ligase activity"/>
    <property type="evidence" value="ECO:0007669"/>
    <property type="project" value="UniProtKB-EC"/>
</dbReference>
<dbReference type="GO" id="GO:0005524">
    <property type="term" value="F:ATP binding"/>
    <property type="evidence" value="ECO:0007669"/>
    <property type="project" value="UniProtKB-UniRule"/>
</dbReference>
<dbReference type="GO" id="GO:0003676">
    <property type="term" value="F:nucleic acid binding"/>
    <property type="evidence" value="ECO:0007669"/>
    <property type="project" value="InterPro"/>
</dbReference>
<dbReference type="GO" id="GO:0006422">
    <property type="term" value="P:aspartyl-tRNA aminoacylation"/>
    <property type="evidence" value="ECO:0007669"/>
    <property type="project" value="UniProtKB-UniRule"/>
</dbReference>
<dbReference type="CDD" id="cd00777">
    <property type="entry name" value="AspRS_core"/>
    <property type="match status" value="1"/>
</dbReference>
<dbReference type="CDD" id="cd04317">
    <property type="entry name" value="EcAspRS_like_N"/>
    <property type="match status" value="1"/>
</dbReference>
<dbReference type="Gene3D" id="3.30.930.10">
    <property type="entry name" value="Bira Bifunctional Protein, Domain 2"/>
    <property type="match status" value="1"/>
</dbReference>
<dbReference type="Gene3D" id="3.30.1360.30">
    <property type="entry name" value="GAD-like domain"/>
    <property type="match status" value="1"/>
</dbReference>
<dbReference type="Gene3D" id="2.40.50.140">
    <property type="entry name" value="Nucleic acid-binding proteins"/>
    <property type="match status" value="1"/>
</dbReference>
<dbReference type="HAMAP" id="MF_00044">
    <property type="entry name" value="Asp_tRNA_synth_type1"/>
    <property type="match status" value="1"/>
</dbReference>
<dbReference type="InterPro" id="IPR004364">
    <property type="entry name" value="Aa-tRNA-synt_II"/>
</dbReference>
<dbReference type="InterPro" id="IPR006195">
    <property type="entry name" value="aa-tRNA-synth_II"/>
</dbReference>
<dbReference type="InterPro" id="IPR045864">
    <property type="entry name" value="aa-tRNA-synth_II/BPL/LPL"/>
</dbReference>
<dbReference type="InterPro" id="IPR004524">
    <property type="entry name" value="Asp-tRNA-ligase_1"/>
</dbReference>
<dbReference type="InterPro" id="IPR047089">
    <property type="entry name" value="Asp-tRNA-ligase_1_N"/>
</dbReference>
<dbReference type="InterPro" id="IPR002312">
    <property type="entry name" value="Asp/Asn-tRNA-synth_IIb"/>
</dbReference>
<dbReference type="InterPro" id="IPR047090">
    <property type="entry name" value="AspRS_core"/>
</dbReference>
<dbReference type="InterPro" id="IPR004115">
    <property type="entry name" value="GAD-like_sf"/>
</dbReference>
<dbReference type="InterPro" id="IPR029351">
    <property type="entry name" value="GAD_dom"/>
</dbReference>
<dbReference type="InterPro" id="IPR012340">
    <property type="entry name" value="NA-bd_OB-fold"/>
</dbReference>
<dbReference type="InterPro" id="IPR004365">
    <property type="entry name" value="NA-bd_OB_tRNA"/>
</dbReference>
<dbReference type="NCBIfam" id="TIGR00459">
    <property type="entry name" value="aspS_bact"/>
    <property type="match status" value="1"/>
</dbReference>
<dbReference type="NCBIfam" id="NF001750">
    <property type="entry name" value="PRK00476.1"/>
    <property type="match status" value="1"/>
</dbReference>
<dbReference type="PANTHER" id="PTHR22594:SF5">
    <property type="entry name" value="ASPARTATE--TRNA LIGASE, MITOCHONDRIAL"/>
    <property type="match status" value="1"/>
</dbReference>
<dbReference type="PANTHER" id="PTHR22594">
    <property type="entry name" value="ASPARTYL/LYSYL-TRNA SYNTHETASE"/>
    <property type="match status" value="1"/>
</dbReference>
<dbReference type="Pfam" id="PF02938">
    <property type="entry name" value="GAD"/>
    <property type="match status" value="1"/>
</dbReference>
<dbReference type="Pfam" id="PF00152">
    <property type="entry name" value="tRNA-synt_2"/>
    <property type="match status" value="1"/>
</dbReference>
<dbReference type="Pfam" id="PF01336">
    <property type="entry name" value="tRNA_anti-codon"/>
    <property type="match status" value="1"/>
</dbReference>
<dbReference type="PRINTS" id="PR01042">
    <property type="entry name" value="TRNASYNTHASP"/>
</dbReference>
<dbReference type="SUPFAM" id="SSF55681">
    <property type="entry name" value="Class II aaRS and biotin synthetases"/>
    <property type="match status" value="1"/>
</dbReference>
<dbReference type="SUPFAM" id="SSF55261">
    <property type="entry name" value="GAD domain-like"/>
    <property type="match status" value="1"/>
</dbReference>
<dbReference type="SUPFAM" id="SSF50249">
    <property type="entry name" value="Nucleic acid-binding proteins"/>
    <property type="match status" value="1"/>
</dbReference>
<dbReference type="PROSITE" id="PS50862">
    <property type="entry name" value="AA_TRNA_LIGASE_II"/>
    <property type="match status" value="1"/>
</dbReference>
<proteinExistence type="inferred from homology"/>
<organism>
    <name type="scientific">Rubrobacter xylanophilus (strain DSM 9941 / JCM 11954 / NBRC 16129 / PRD-1)</name>
    <dbReference type="NCBI Taxonomy" id="266117"/>
    <lineage>
        <taxon>Bacteria</taxon>
        <taxon>Bacillati</taxon>
        <taxon>Actinomycetota</taxon>
        <taxon>Rubrobacteria</taxon>
        <taxon>Rubrobacterales</taxon>
        <taxon>Rubrobacteraceae</taxon>
        <taxon>Rubrobacter</taxon>
    </lineage>
</organism>
<name>SYDND_RUBXD</name>
<protein>
    <recommendedName>
        <fullName evidence="1">Aspartate--tRNA(Asp/Asn) ligase</fullName>
        <ecNumber evidence="1">6.1.1.23</ecNumber>
    </recommendedName>
    <alternativeName>
        <fullName evidence="1">Aspartyl-tRNA synthetase</fullName>
        <shortName evidence="1">AspRS</shortName>
    </alternativeName>
    <alternativeName>
        <fullName evidence="1">Non-discriminating aspartyl-tRNA synthetase</fullName>
        <shortName evidence="1">ND-AspRS</shortName>
    </alternativeName>
</protein>
<keyword id="KW-0030">Aminoacyl-tRNA synthetase</keyword>
<keyword id="KW-0067">ATP-binding</keyword>
<keyword id="KW-0963">Cytoplasm</keyword>
<keyword id="KW-0436">Ligase</keyword>
<keyword id="KW-0547">Nucleotide-binding</keyword>
<keyword id="KW-0648">Protein biosynthesis</keyword>
<keyword id="KW-1185">Reference proteome</keyword>
<evidence type="ECO:0000255" key="1">
    <source>
        <dbReference type="HAMAP-Rule" id="MF_00044"/>
    </source>
</evidence>
<sequence length="600" mass="68753">MHGTATNPYRTHTAGELRASNVGQRVRLAGWVHRRRDHGGLIFVDLRDRWGITQVTFDPERGEVFSAAERLRPEWSVSVEGEVVRRPEGNENPELPTGEIEVEASSLRVLNASETPPFEIDRERPVDELTRLRYRYLDLRRERMRENILFRDRVVRYIRRYLAERDFVEVETPLLTKSTPEGARDYLVPSRLYPGQFYALPQSPQQFKQLLMVAGLERYFQIARALRDEDQRGDRQPEHTQLDLEMSYTTQDEVLQLIEGLYTEIVERLTEKRVLFKPFPRLTYAEAMERFGSDKPDLRFGLELRDVSDLARSSEFKVFRNAVEAGGSVRGLAAGGLGDLSRRELDGLTEVAREGGARGLAHLRAEGKALKGPVAKFFSAEEQAALREALGARPGDWMFFVADRDPVVFESLNRLRLHLRDRLGLADRDALAFCWITDFPLFEYNEEEGRIEPMHHMFTMPREEDIPLLDTDPLAVTGQLYDLVANGVELASGSIRIHRPDLQQKVFSIIGIDEEEAERRFGTLLRAFRYGAPPHGGIAPGIDRLVMLLRDEPNIREVMAFPKTQAARDEMMDAPSPVSEEQLRELHISLCLPPEERRNP</sequence>
<feature type="chain" id="PRO_1000074715" description="Aspartate--tRNA(Asp/Asn) ligase">
    <location>
        <begin position="1"/>
        <end position="600"/>
    </location>
</feature>
<feature type="region of interest" description="Aspartate" evidence="1">
    <location>
        <begin position="205"/>
        <end position="208"/>
    </location>
</feature>
<feature type="binding site" evidence="1">
    <location>
        <position position="181"/>
    </location>
    <ligand>
        <name>L-aspartate</name>
        <dbReference type="ChEBI" id="CHEBI:29991"/>
    </ligand>
</feature>
<feature type="binding site" evidence="1">
    <location>
        <begin position="227"/>
        <end position="229"/>
    </location>
    <ligand>
        <name>ATP</name>
        <dbReference type="ChEBI" id="CHEBI:30616"/>
    </ligand>
</feature>
<feature type="binding site" evidence="1">
    <location>
        <position position="227"/>
    </location>
    <ligand>
        <name>L-aspartate</name>
        <dbReference type="ChEBI" id="CHEBI:29991"/>
    </ligand>
</feature>
<feature type="binding site" evidence="1">
    <location>
        <position position="236"/>
    </location>
    <ligand>
        <name>ATP</name>
        <dbReference type="ChEBI" id="CHEBI:30616"/>
    </ligand>
</feature>
<feature type="binding site" evidence="1">
    <location>
        <position position="455"/>
    </location>
    <ligand>
        <name>L-aspartate</name>
        <dbReference type="ChEBI" id="CHEBI:29991"/>
    </ligand>
</feature>
<feature type="binding site" evidence="1">
    <location>
        <position position="489"/>
    </location>
    <ligand>
        <name>ATP</name>
        <dbReference type="ChEBI" id="CHEBI:30616"/>
    </ligand>
</feature>
<feature type="binding site" evidence="1">
    <location>
        <position position="496"/>
    </location>
    <ligand>
        <name>L-aspartate</name>
        <dbReference type="ChEBI" id="CHEBI:29991"/>
    </ligand>
</feature>
<feature type="binding site" evidence="1">
    <location>
        <begin position="541"/>
        <end position="544"/>
    </location>
    <ligand>
        <name>ATP</name>
        <dbReference type="ChEBI" id="CHEBI:30616"/>
    </ligand>
</feature>
<feature type="site" description="Important for tRNA non-discrimination" evidence="1">
    <location>
        <position position="38"/>
    </location>
</feature>
<feature type="site" description="Important for tRNA non-discrimination" evidence="1">
    <location>
        <position position="89"/>
    </location>
</feature>
<accession>Q1AWB4</accession>
<reference key="1">
    <citation type="submission" date="2006-06" db="EMBL/GenBank/DDBJ databases">
        <title>Complete sequence of Rubrobacter xylanophilus DSM 9941.</title>
        <authorList>
            <consortium name="US DOE Joint Genome Institute"/>
            <person name="Copeland A."/>
            <person name="Lucas S."/>
            <person name="Lapidus A."/>
            <person name="Barry K."/>
            <person name="Detter J.C."/>
            <person name="Glavina del Rio T."/>
            <person name="Hammon N."/>
            <person name="Israni S."/>
            <person name="Dalin E."/>
            <person name="Tice H."/>
            <person name="Pitluck S."/>
            <person name="Munk A.C."/>
            <person name="Brettin T."/>
            <person name="Bruce D."/>
            <person name="Han C."/>
            <person name="Tapia R."/>
            <person name="Gilna P."/>
            <person name="Schmutz J."/>
            <person name="Larimer F."/>
            <person name="Land M."/>
            <person name="Hauser L."/>
            <person name="Kyrpides N."/>
            <person name="Lykidis A."/>
            <person name="da Costa M.S."/>
            <person name="Rainey F.A."/>
            <person name="Empadinhas N."/>
            <person name="Jolivet E."/>
            <person name="Battista J.R."/>
            <person name="Richardson P."/>
        </authorList>
    </citation>
    <scope>NUCLEOTIDE SEQUENCE [LARGE SCALE GENOMIC DNA]</scope>
    <source>
        <strain>DSM 9941 / JCM 11954 / NBRC 16129 / PRD-1</strain>
    </source>
</reference>
<gene>
    <name evidence="1" type="primary">aspS</name>
    <name type="ordered locus">Rxyl_1351</name>
</gene>